<gene>
    <name evidence="1" type="primary">greA</name>
    <name type="ordered locus">SPN23F14810</name>
</gene>
<proteinExistence type="inferred from homology"/>
<reference key="1">
    <citation type="journal article" date="2009" name="J. Bacteriol.">
        <title>Role of conjugative elements in the evolution of the multidrug-resistant pandemic clone Streptococcus pneumoniae Spain23F ST81.</title>
        <authorList>
            <person name="Croucher N.J."/>
            <person name="Walker D."/>
            <person name="Romero P."/>
            <person name="Lennard N."/>
            <person name="Paterson G.K."/>
            <person name="Bason N.C."/>
            <person name="Mitchell A.M."/>
            <person name="Quail M.A."/>
            <person name="Andrew P.W."/>
            <person name="Parkhill J."/>
            <person name="Bentley S.D."/>
            <person name="Mitchell T.J."/>
        </authorList>
    </citation>
    <scope>NUCLEOTIDE SEQUENCE [LARGE SCALE GENOMIC DNA]</scope>
    <source>
        <strain>ATCC 700669 / Spain 23F-1</strain>
    </source>
</reference>
<evidence type="ECO:0000255" key="1">
    <source>
        <dbReference type="HAMAP-Rule" id="MF_00105"/>
    </source>
</evidence>
<keyword id="KW-0175">Coiled coil</keyword>
<keyword id="KW-0238">DNA-binding</keyword>
<keyword id="KW-0804">Transcription</keyword>
<keyword id="KW-0805">Transcription regulation</keyword>
<protein>
    <recommendedName>
        <fullName evidence="1">Transcription elongation factor GreA</fullName>
    </recommendedName>
    <alternativeName>
        <fullName evidence="1">Transcript cleavage factor GreA</fullName>
    </alternativeName>
</protein>
<sequence length="160" mass="17544">MAEKTYPMTLEEKEKLEKELEELKLVRRPEVVERIKIARSYGDLSENSEYEAAKDEQAFVEGQISSLETKIRYAEIVNSDAVAQDEVAIGKTVTIQEIGEDEEEVYIIVGSAGADAFAGKVSNESPIGQALIGKKTGDTATIETPVGSYDVKILKVEKTA</sequence>
<accession>B8ZLB8</accession>
<dbReference type="EMBL" id="FM211187">
    <property type="protein sequence ID" value="CAR69263.1"/>
    <property type="molecule type" value="Genomic_DNA"/>
</dbReference>
<dbReference type="RefSeq" id="WP_000818760.1">
    <property type="nucleotide sequence ID" value="NC_011900.1"/>
</dbReference>
<dbReference type="SMR" id="B8ZLB8"/>
<dbReference type="GeneID" id="45653244"/>
<dbReference type="KEGG" id="sne:SPN23F14810"/>
<dbReference type="HOGENOM" id="CLU_101379_2_1_9"/>
<dbReference type="GO" id="GO:0003677">
    <property type="term" value="F:DNA binding"/>
    <property type="evidence" value="ECO:0007669"/>
    <property type="project" value="UniProtKB-UniRule"/>
</dbReference>
<dbReference type="GO" id="GO:0070063">
    <property type="term" value="F:RNA polymerase binding"/>
    <property type="evidence" value="ECO:0007669"/>
    <property type="project" value="InterPro"/>
</dbReference>
<dbReference type="GO" id="GO:0006354">
    <property type="term" value="P:DNA-templated transcription elongation"/>
    <property type="evidence" value="ECO:0007669"/>
    <property type="project" value="TreeGrafter"/>
</dbReference>
<dbReference type="GO" id="GO:0032784">
    <property type="term" value="P:regulation of DNA-templated transcription elongation"/>
    <property type="evidence" value="ECO:0007669"/>
    <property type="project" value="UniProtKB-UniRule"/>
</dbReference>
<dbReference type="FunFam" id="1.10.287.180:FF:000001">
    <property type="entry name" value="Transcription elongation factor GreA"/>
    <property type="match status" value="1"/>
</dbReference>
<dbReference type="FunFam" id="3.10.50.30:FF:000001">
    <property type="entry name" value="Transcription elongation factor GreA"/>
    <property type="match status" value="1"/>
</dbReference>
<dbReference type="Gene3D" id="3.10.50.30">
    <property type="entry name" value="Transcription elongation factor, GreA/GreB, C-terminal domain"/>
    <property type="match status" value="1"/>
</dbReference>
<dbReference type="Gene3D" id="1.10.287.180">
    <property type="entry name" value="Transcription elongation factor, GreA/GreB, N-terminal domain"/>
    <property type="match status" value="1"/>
</dbReference>
<dbReference type="HAMAP" id="MF_00105">
    <property type="entry name" value="GreA_GreB"/>
    <property type="match status" value="1"/>
</dbReference>
<dbReference type="InterPro" id="IPR036953">
    <property type="entry name" value="GreA/GreB_C_sf"/>
</dbReference>
<dbReference type="InterPro" id="IPR018151">
    <property type="entry name" value="TF_GreA/GreB_CS"/>
</dbReference>
<dbReference type="InterPro" id="IPR006359">
    <property type="entry name" value="Tscrpt_elong_fac_GreA"/>
</dbReference>
<dbReference type="InterPro" id="IPR028624">
    <property type="entry name" value="Tscrpt_elong_fac_GreA/B"/>
</dbReference>
<dbReference type="InterPro" id="IPR001437">
    <property type="entry name" value="Tscrpt_elong_fac_GreA/B_C"/>
</dbReference>
<dbReference type="InterPro" id="IPR023459">
    <property type="entry name" value="Tscrpt_elong_fac_GreA/B_fam"/>
</dbReference>
<dbReference type="InterPro" id="IPR022691">
    <property type="entry name" value="Tscrpt_elong_fac_GreA/B_N"/>
</dbReference>
<dbReference type="InterPro" id="IPR036805">
    <property type="entry name" value="Tscrpt_elong_fac_GreA/B_N_sf"/>
</dbReference>
<dbReference type="NCBIfam" id="TIGR01462">
    <property type="entry name" value="greA"/>
    <property type="match status" value="1"/>
</dbReference>
<dbReference type="NCBIfam" id="NF001260">
    <property type="entry name" value="PRK00226.1-1"/>
    <property type="match status" value="1"/>
</dbReference>
<dbReference type="NCBIfam" id="NF001263">
    <property type="entry name" value="PRK00226.1-4"/>
    <property type="match status" value="1"/>
</dbReference>
<dbReference type="PANTHER" id="PTHR30437">
    <property type="entry name" value="TRANSCRIPTION ELONGATION FACTOR GREA"/>
    <property type="match status" value="1"/>
</dbReference>
<dbReference type="PANTHER" id="PTHR30437:SF4">
    <property type="entry name" value="TRANSCRIPTION ELONGATION FACTOR GREA"/>
    <property type="match status" value="1"/>
</dbReference>
<dbReference type="Pfam" id="PF01272">
    <property type="entry name" value="GreA_GreB"/>
    <property type="match status" value="1"/>
</dbReference>
<dbReference type="Pfam" id="PF03449">
    <property type="entry name" value="GreA_GreB_N"/>
    <property type="match status" value="1"/>
</dbReference>
<dbReference type="PIRSF" id="PIRSF006092">
    <property type="entry name" value="GreA_GreB"/>
    <property type="match status" value="1"/>
</dbReference>
<dbReference type="SUPFAM" id="SSF54534">
    <property type="entry name" value="FKBP-like"/>
    <property type="match status" value="1"/>
</dbReference>
<dbReference type="SUPFAM" id="SSF46557">
    <property type="entry name" value="GreA transcript cleavage protein, N-terminal domain"/>
    <property type="match status" value="1"/>
</dbReference>
<dbReference type="PROSITE" id="PS00829">
    <property type="entry name" value="GREAB_1"/>
    <property type="match status" value="1"/>
</dbReference>
<dbReference type="PROSITE" id="PS00830">
    <property type="entry name" value="GREAB_2"/>
    <property type="match status" value="1"/>
</dbReference>
<name>GREA_STRPJ</name>
<feature type="chain" id="PRO_1000190226" description="Transcription elongation factor GreA">
    <location>
        <begin position="1"/>
        <end position="160"/>
    </location>
</feature>
<feature type="coiled-coil region" evidence="1">
    <location>
        <begin position="1"/>
        <end position="72"/>
    </location>
</feature>
<comment type="function">
    <text evidence="1">Necessary for efficient RNA polymerase transcription elongation past template-encoded arresting sites. The arresting sites in DNA have the property of trapping a certain fraction of elongating RNA polymerases that pass through, resulting in locked ternary complexes. Cleavage of the nascent transcript by cleavage factors such as GreA or GreB allows the resumption of elongation from the new 3'terminus. GreA releases sequences of 2 to 3 nucleotides.</text>
</comment>
<comment type="similarity">
    <text evidence="1">Belongs to the GreA/GreB family.</text>
</comment>
<organism>
    <name type="scientific">Streptococcus pneumoniae (strain ATCC 700669 / Spain 23F-1)</name>
    <dbReference type="NCBI Taxonomy" id="561276"/>
    <lineage>
        <taxon>Bacteria</taxon>
        <taxon>Bacillati</taxon>
        <taxon>Bacillota</taxon>
        <taxon>Bacilli</taxon>
        <taxon>Lactobacillales</taxon>
        <taxon>Streptococcaceae</taxon>
        <taxon>Streptococcus</taxon>
    </lineage>
</organism>